<comment type="function">
    <text evidence="1">Cell wall formation. Catalyzes the transfer of a GlcNAc subunit on undecaprenyl-pyrophosphoryl-MurNAc-pentapeptide (lipid intermediate I) to form undecaprenyl-pyrophosphoryl-MurNAc-(pentapeptide)GlcNAc (lipid intermediate II).</text>
</comment>
<comment type="catalytic activity">
    <reaction evidence="1">
        <text>di-trans,octa-cis-undecaprenyl diphospho-N-acetyl-alpha-D-muramoyl-L-alanyl-D-glutamyl-meso-2,6-diaminopimeloyl-D-alanyl-D-alanine + UDP-N-acetyl-alpha-D-glucosamine = di-trans,octa-cis-undecaprenyl diphospho-[N-acetyl-alpha-D-glucosaminyl-(1-&gt;4)]-N-acetyl-alpha-D-muramoyl-L-alanyl-D-glutamyl-meso-2,6-diaminopimeloyl-D-alanyl-D-alanine + UDP + H(+)</text>
        <dbReference type="Rhea" id="RHEA:31227"/>
        <dbReference type="ChEBI" id="CHEBI:15378"/>
        <dbReference type="ChEBI" id="CHEBI:57705"/>
        <dbReference type="ChEBI" id="CHEBI:58223"/>
        <dbReference type="ChEBI" id="CHEBI:61387"/>
        <dbReference type="ChEBI" id="CHEBI:61388"/>
        <dbReference type="EC" id="2.4.1.227"/>
    </reaction>
</comment>
<comment type="pathway">
    <text evidence="1">Cell wall biogenesis; peptidoglycan biosynthesis.</text>
</comment>
<comment type="subcellular location">
    <subcellularLocation>
        <location evidence="1">Cell inner membrane</location>
        <topology evidence="1">Peripheral membrane protein</topology>
        <orientation evidence="1">Cytoplasmic side</orientation>
    </subcellularLocation>
</comment>
<comment type="similarity">
    <text evidence="1">Belongs to the glycosyltransferase 28 family. MurG subfamily.</text>
</comment>
<dbReference type="EC" id="2.4.1.227" evidence="1"/>
<dbReference type="EMBL" id="BA000045">
    <property type="protein sequence ID" value="BAC89612.1"/>
    <property type="molecule type" value="Genomic_DNA"/>
</dbReference>
<dbReference type="RefSeq" id="NP_924617.1">
    <property type="nucleotide sequence ID" value="NC_005125.1"/>
</dbReference>
<dbReference type="RefSeq" id="WP_011141670.1">
    <property type="nucleotide sequence ID" value="NC_005125.1"/>
</dbReference>
<dbReference type="SMR" id="Q7MBC4"/>
<dbReference type="FunCoup" id="Q7MBC4">
    <property type="interactions" value="72"/>
</dbReference>
<dbReference type="STRING" id="251221.gene:10759161"/>
<dbReference type="CAZy" id="GT28">
    <property type="family name" value="Glycosyltransferase Family 28"/>
</dbReference>
<dbReference type="EnsemblBacteria" id="BAC89612">
    <property type="protein sequence ID" value="BAC89612"/>
    <property type="gene ID" value="BAC89612"/>
</dbReference>
<dbReference type="KEGG" id="gvi:gll1671"/>
<dbReference type="PATRIC" id="fig|251221.4.peg.1706"/>
<dbReference type="eggNOG" id="COG0707">
    <property type="taxonomic scope" value="Bacteria"/>
</dbReference>
<dbReference type="HOGENOM" id="CLU_037404_0_1_3"/>
<dbReference type="InParanoid" id="Q7MBC4"/>
<dbReference type="OrthoDB" id="9808936at2"/>
<dbReference type="PhylomeDB" id="Q7MBC4"/>
<dbReference type="UniPathway" id="UPA00219"/>
<dbReference type="Proteomes" id="UP000000557">
    <property type="component" value="Chromosome"/>
</dbReference>
<dbReference type="GO" id="GO:0005886">
    <property type="term" value="C:plasma membrane"/>
    <property type="evidence" value="ECO:0007669"/>
    <property type="project" value="UniProtKB-SubCell"/>
</dbReference>
<dbReference type="GO" id="GO:0016757">
    <property type="term" value="F:glycosyltransferase activity"/>
    <property type="evidence" value="ECO:0000318"/>
    <property type="project" value="GO_Central"/>
</dbReference>
<dbReference type="GO" id="GO:0051991">
    <property type="term" value="F:UDP-N-acetyl-D-glucosamine:N-acetylmuramoyl-L-alanyl-D-glutamyl-meso-2,6-diaminopimelyl-D-alanyl-D-alanine-diphosphoundecaprenol 4-beta-N-acetylglucosaminlytransferase activity"/>
    <property type="evidence" value="ECO:0007669"/>
    <property type="project" value="RHEA"/>
</dbReference>
<dbReference type="GO" id="GO:0050511">
    <property type="term" value="F:undecaprenyldiphospho-muramoylpentapeptide beta-N-acetylglucosaminyltransferase activity"/>
    <property type="evidence" value="ECO:0007669"/>
    <property type="project" value="UniProtKB-UniRule"/>
</dbReference>
<dbReference type="GO" id="GO:0005975">
    <property type="term" value="P:carbohydrate metabolic process"/>
    <property type="evidence" value="ECO:0007669"/>
    <property type="project" value="InterPro"/>
</dbReference>
<dbReference type="GO" id="GO:0051301">
    <property type="term" value="P:cell division"/>
    <property type="evidence" value="ECO:0007669"/>
    <property type="project" value="UniProtKB-KW"/>
</dbReference>
<dbReference type="GO" id="GO:0071555">
    <property type="term" value="P:cell wall organization"/>
    <property type="evidence" value="ECO:0007669"/>
    <property type="project" value="UniProtKB-KW"/>
</dbReference>
<dbReference type="GO" id="GO:0030259">
    <property type="term" value="P:lipid glycosylation"/>
    <property type="evidence" value="ECO:0007669"/>
    <property type="project" value="UniProtKB-UniRule"/>
</dbReference>
<dbReference type="GO" id="GO:0009252">
    <property type="term" value="P:peptidoglycan biosynthetic process"/>
    <property type="evidence" value="ECO:0007669"/>
    <property type="project" value="UniProtKB-UniRule"/>
</dbReference>
<dbReference type="GO" id="GO:0008360">
    <property type="term" value="P:regulation of cell shape"/>
    <property type="evidence" value="ECO:0007669"/>
    <property type="project" value="UniProtKB-KW"/>
</dbReference>
<dbReference type="CDD" id="cd03785">
    <property type="entry name" value="GT28_MurG"/>
    <property type="match status" value="1"/>
</dbReference>
<dbReference type="Gene3D" id="3.40.50.2000">
    <property type="entry name" value="Glycogen Phosphorylase B"/>
    <property type="match status" value="2"/>
</dbReference>
<dbReference type="HAMAP" id="MF_00033">
    <property type="entry name" value="MurG"/>
    <property type="match status" value="1"/>
</dbReference>
<dbReference type="InterPro" id="IPR006009">
    <property type="entry name" value="GlcNAc_MurG"/>
</dbReference>
<dbReference type="InterPro" id="IPR007235">
    <property type="entry name" value="Glyco_trans_28_C"/>
</dbReference>
<dbReference type="InterPro" id="IPR004276">
    <property type="entry name" value="GlycoTrans_28_N"/>
</dbReference>
<dbReference type="NCBIfam" id="TIGR01133">
    <property type="entry name" value="murG"/>
    <property type="match status" value="1"/>
</dbReference>
<dbReference type="PANTHER" id="PTHR21015:SF22">
    <property type="entry name" value="GLYCOSYLTRANSFERASE"/>
    <property type="match status" value="1"/>
</dbReference>
<dbReference type="PANTHER" id="PTHR21015">
    <property type="entry name" value="UDP-N-ACETYLGLUCOSAMINE--N-ACETYLMURAMYL-(PENTAPEPTIDE) PYROPHOSPHORYL-UNDECAPRENOL N-ACETYLGLUCOSAMINE TRANSFERASE 1"/>
    <property type="match status" value="1"/>
</dbReference>
<dbReference type="Pfam" id="PF04101">
    <property type="entry name" value="Glyco_tran_28_C"/>
    <property type="match status" value="1"/>
</dbReference>
<dbReference type="Pfam" id="PF03033">
    <property type="entry name" value="Glyco_transf_28"/>
    <property type="match status" value="1"/>
</dbReference>
<dbReference type="SUPFAM" id="SSF53756">
    <property type="entry name" value="UDP-Glycosyltransferase/glycogen phosphorylase"/>
    <property type="match status" value="1"/>
</dbReference>
<reference key="1">
    <citation type="journal article" date="2003" name="DNA Res.">
        <title>Complete genome structure of Gloeobacter violaceus PCC 7421, a cyanobacterium that lacks thylakoids.</title>
        <authorList>
            <person name="Nakamura Y."/>
            <person name="Kaneko T."/>
            <person name="Sato S."/>
            <person name="Mimuro M."/>
            <person name="Miyashita H."/>
            <person name="Tsuchiya T."/>
            <person name="Sasamoto S."/>
            <person name="Watanabe A."/>
            <person name="Kawashima K."/>
            <person name="Kishida Y."/>
            <person name="Kiyokawa C."/>
            <person name="Kohara M."/>
            <person name="Matsumoto M."/>
            <person name="Matsuno A."/>
            <person name="Nakazaki N."/>
            <person name="Shimpo S."/>
            <person name="Takeuchi C."/>
            <person name="Yamada M."/>
            <person name="Tabata S."/>
        </authorList>
    </citation>
    <scope>NUCLEOTIDE SEQUENCE [LARGE SCALE GENOMIC DNA]</scope>
    <source>
        <strain>ATCC 29082 / PCC 7421</strain>
    </source>
</reference>
<proteinExistence type="inferred from homology"/>
<evidence type="ECO:0000255" key="1">
    <source>
        <dbReference type="HAMAP-Rule" id="MF_00033"/>
    </source>
</evidence>
<organism>
    <name type="scientific">Gloeobacter violaceus (strain ATCC 29082 / PCC 7421)</name>
    <dbReference type="NCBI Taxonomy" id="251221"/>
    <lineage>
        <taxon>Bacteria</taxon>
        <taxon>Bacillati</taxon>
        <taxon>Cyanobacteriota</taxon>
        <taxon>Cyanophyceae</taxon>
        <taxon>Gloeobacterales</taxon>
        <taxon>Gloeobacteraceae</taxon>
        <taxon>Gloeobacter</taxon>
    </lineage>
</organism>
<name>MURG_GLOVI</name>
<keyword id="KW-0131">Cell cycle</keyword>
<keyword id="KW-0132">Cell division</keyword>
<keyword id="KW-0997">Cell inner membrane</keyword>
<keyword id="KW-1003">Cell membrane</keyword>
<keyword id="KW-0133">Cell shape</keyword>
<keyword id="KW-0961">Cell wall biogenesis/degradation</keyword>
<keyword id="KW-0328">Glycosyltransferase</keyword>
<keyword id="KW-0472">Membrane</keyword>
<keyword id="KW-0573">Peptidoglycan synthesis</keyword>
<keyword id="KW-1185">Reference proteome</keyword>
<keyword id="KW-0808">Transferase</keyword>
<gene>
    <name evidence="1" type="primary">murG</name>
    <name type="ordered locus">gll1671</name>
</gene>
<sequence>MPKPRLLIAASGTGGHIFPALAVAGELSEFEIAWLGVPDRLENKLVPGRYPLHTVALQGLNRKPGPQWLEAASQTFAAYRYARNLLSQERFAGVFTTGGYIAAPAVLAARSLNLPAIGHESNVLPGKVIRYLARWMRSLGLGFAESATYVSGATTRWVGTPVRPEFLISPNPLLDVPVPPEAPLIVVMGGSQGARAINQMVGECAPGWLERGWWIVHLTGAGEYDAVREGTPDHPAYRIYAFWEKMAPLLSRADLAISRAGAATLSELLVTGTPSLLIPYPFAAEDHQSVNAAALVRAGAALQFSQAALSAPLLDRTVQALLDNPETLARMAASARRLAVPDAARRTADLVRECVRH</sequence>
<feature type="chain" id="PRO_0000109175" description="UDP-N-acetylglucosamine--N-acetylmuramyl-(pentapeptide) pyrophosphoryl-undecaprenol N-acetylglucosamine transferase">
    <location>
        <begin position="1"/>
        <end position="357"/>
    </location>
</feature>
<feature type="binding site" evidence="1">
    <location>
        <begin position="13"/>
        <end position="15"/>
    </location>
    <ligand>
        <name>UDP-N-acetyl-alpha-D-glucosamine</name>
        <dbReference type="ChEBI" id="CHEBI:57705"/>
    </ligand>
</feature>
<feature type="binding site" evidence="1">
    <location>
        <position position="122"/>
    </location>
    <ligand>
        <name>UDP-N-acetyl-alpha-D-glucosamine</name>
        <dbReference type="ChEBI" id="CHEBI:57705"/>
    </ligand>
</feature>
<feature type="binding site" evidence="1">
    <location>
        <position position="163"/>
    </location>
    <ligand>
        <name>UDP-N-acetyl-alpha-D-glucosamine</name>
        <dbReference type="ChEBI" id="CHEBI:57705"/>
    </ligand>
</feature>
<feature type="binding site" evidence="1">
    <location>
        <position position="191"/>
    </location>
    <ligand>
        <name>UDP-N-acetyl-alpha-D-glucosamine</name>
        <dbReference type="ChEBI" id="CHEBI:57705"/>
    </ligand>
</feature>
<feature type="binding site" evidence="1">
    <location>
        <position position="288"/>
    </location>
    <ligand>
        <name>UDP-N-acetyl-alpha-D-glucosamine</name>
        <dbReference type="ChEBI" id="CHEBI:57705"/>
    </ligand>
</feature>
<accession>Q7MBC4</accession>
<protein>
    <recommendedName>
        <fullName evidence="1">UDP-N-acetylglucosamine--N-acetylmuramyl-(pentapeptide) pyrophosphoryl-undecaprenol N-acetylglucosamine transferase</fullName>
        <ecNumber evidence="1">2.4.1.227</ecNumber>
    </recommendedName>
    <alternativeName>
        <fullName evidence="1">Undecaprenyl-PP-MurNAc-pentapeptide-UDPGlcNAc GlcNAc transferase</fullName>
    </alternativeName>
</protein>